<dbReference type="EMBL" id="AL123456">
    <property type="protein sequence ID" value="CCP45521.1"/>
    <property type="molecule type" value="Genomic_DNA"/>
</dbReference>
<dbReference type="PIR" id="B70505">
    <property type="entry name" value="B70505"/>
</dbReference>
<dbReference type="RefSeq" id="NP_217239.1">
    <property type="nucleotide sequence ID" value="NC_000962.3"/>
</dbReference>
<dbReference type="RefSeq" id="WP_003413979.1">
    <property type="nucleotide sequence ID" value="NZ_NVQJ01000017.1"/>
</dbReference>
<dbReference type="FunCoup" id="P9WG93">
    <property type="interactions" value="64"/>
</dbReference>
<dbReference type="STRING" id="83332.Rv2723"/>
<dbReference type="PaxDb" id="83332-Rv2723"/>
<dbReference type="DNASU" id="887768"/>
<dbReference type="GeneID" id="887768"/>
<dbReference type="KEGG" id="mtu:Rv2723"/>
<dbReference type="KEGG" id="mtv:RVBD_2723"/>
<dbReference type="TubercuList" id="Rv2723"/>
<dbReference type="eggNOG" id="COG0861">
    <property type="taxonomic scope" value="Bacteria"/>
</dbReference>
<dbReference type="InParanoid" id="P9WG93"/>
<dbReference type="OrthoDB" id="5242957at2"/>
<dbReference type="PhylomeDB" id="P9WG93"/>
<dbReference type="Proteomes" id="UP000001584">
    <property type="component" value="Chromosome"/>
</dbReference>
<dbReference type="GO" id="GO:0005886">
    <property type="term" value="C:plasma membrane"/>
    <property type="evidence" value="ECO:0007669"/>
    <property type="project" value="UniProtKB-SubCell"/>
</dbReference>
<dbReference type="InterPro" id="IPR005496">
    <property type="entry name" value="Integral_membrane_TerC"/>
</dbReference>
<dbReference type="InterPro" id="IPR022369">
    <property type="entry name" value="Integral_membrane_TerC_rswitch"/>
</dbReference>
<dbReference type="NCBIfam" id="TIGR03718">
    <property type="entry name" value="R_switched_Alx"/>
    <property type="match status" value="1"/>
</dbReference>
<dbReference type="PANTHER" id="PTHR30238">
    <property type="entry name" value="MEMBRANE BOUND PREDICTED REDOX MODULATOR"/>
    <property type="match status" value="1"/>
</dbReference>
<dbReference type="PANTHER" id="PTHR30238:SF0">
    <property type="entry name" value="THYLAKOID MEMBRANE PROTEIN TERC, CHLOROPLASTIC"/>
    <property type="match status" value="1"/>
</dbReference>
<dbReference type="Pfam" id="PF03741">
    <property type="entry name" value="TerC"/>
    <property type="match status" value="1"/>
</dbReference>
<reference key="1">
    <citation type="journal article" date="1998" name="Nature">
        <title>Deciphering the biology of Mycobacterium tuberculosis from the complete genome sequence.</title>
        <authorList>
            <person name="Cole S.T."/>
            <person name="Brosch R."/>
            <person name="Parkhill J."/>
            <person name="Garnier T."/>
            <person name="Churcher C.M."/>
            <person name="Harris D.E."/>
            <person name="Gordon S.V."/>
            <person name="Eiglmeier K."/>
            <person name="Gas S."/>
            <person name="Barry C.E. III"/>
            <person name="Tekaia F."/>
            <person name="Badcock K."/>
            <person name="Basham D."/>
            <person name="Brown D."/>
            <person name="Chillingworth T."/>
            <person name="Connor R."/>
            <person name="Davies R.M."/>
            <person name="Devlin K."/>
            <person name="Feltwell T."/>
            <person name="Gentles S."/>
            <person name="Hamlin N."/>
            <person name="Holroyd S."/>
            <person name="Hornsby T."/>
            <person name="Jagels K."/>
            <person name="Krogh A."/>
            <person name="McLean J."/>
            <person name="Moule S."/>
            <person name="Murphy L.D."/>
            <person name="Oliver S."/>
            <person name="Osborne J."/>
            <person name="Quail M.A."/>
            <person name="Rajandream M.A."/>
            <person name="Rogers J."/>
            <person name="Rutter S."/>
            <person name="Seeger K."/>
            <person name="Skelton S."/>
            <person name="Squares S."/>
            <person name="Squares R."/>
            <person name="Sulston J.E."/>
            <person name="Taylor K."/>
            <person name="Whitehead S."/>
            <person name="Barrell B.G."/>
        </authorList>
    </citation>
    <scope>NUCLEOTIDE SEQUENCE [LARGE SCALE GENOMIC DNA]</scope>
    <source>
        <strain>ATCC 25618 / H37Rv</strain>
    </source>
</reference>
<reference key="2">
    <citation type="journal article" date="2011" name="Mol. Cell. Proteomics">
        <title>Proteogenomic analysis of Mycobacterium tuberculosis by high resolution mass spectrometry.</title>
        <authorList>
            <person name="Kelkar D.S."/>
            <person name="Kumar D."/>
            <person name="Kumar P."/>
            <person name="Balakrishnan L."/>
            <person name="Muthusamy B."/>
            <person name="Yadav A.K."/>
            <person name="Shrivastava P."/>
            <person name="Marimuthu A."/>
            <person name="Anand S."/>
            <person name="Sundaram H."/>
            <person name="Kingsbury R."/>
            <person name="Harsha H.C."/>
            <person name="Nair B."/>
            <person name="Prasad T.S."/>
            <person name="Chauhan D.S."/>
            <person name="Katoch K."/>
            <person name="Katoch V.M."/>
            <person name="Kumar P."/>
            <person name="Chaerkady R."/>
            <person name="Ramachandran S."/>
            <person name="Dash D."/>
            <person name="Pandey A."/>
        </authorList>
    </citation>
    <scope>IDENTIFICATION BY MASS SPECTROMETRY [LARGE SCALE ANALYSIS]</scope>
    <source>
        <strain>ATCC 25618 / H37Rv</strain>
    </source>
</reference>
<protein>
    <recommendedName>
        <fullName>Uncharacterized membrane protein Rv2723</fullName>
    </recommendedName>
</protein>
<gene>
    <name type="ordered locus">Rv2723</name>
    <name type="ORF">MTCY154.03</name>
</gene>
<proteinExistence type="evidence at protein level"/>
<name>Y2723_MYCTU</name>
<organism>
    <name type="scientific">Mycobacterium tuberculosis (strain ATCC 25618 / H37Rv)</name>
    <dbReference type="NCBI Taxonomy" id="83332"/>
    <lineage>
        <taxon>Bacteria</taxon>
        <taxon>Bacillati</taxon>
        <taxon>Actinomycetota</taxon>
        <taxon>Actinomycetes</taxon>
        <taxon>Mycobacteriales</taxon>
        <taxon>Mycobacteriaceae</taxon>
        <taxon>Mycobacterium</taxon>
        <taxon>Mycobacterium tuberculosis complex</taxon>
    </lineage>
</organism>
<comment type="subcellular location">
    <subcellularLocation>
        <location evidence="2">Cell membrane</location>
        <topology evidence="2">Multi-pass membrane protein</topology>
    </subcellularLocation>
</comment>
<comment type="similarity">
    <text evidence="2">Belongs to the TerC family.</text>
</comment>
<evidence type="ECO:0000255" key="1"/>
<evidence type="ECO:0000305" key="2"/>
<feature type="chain" id="PRO_0000103421" description="Uncharacterized membrane protein Rv2723">
    <location>
        <begin position="1"/>
        <end position="397"/>
    </location>
</feature>
<feature type="transmembrane region" description="Helical" evidence="1">
    <location>
        <begin position="1"/>
        <end position="21"/>
    </location>
</feature>
<feature type="transmembrane region" description="Helical" evidence="1">
    <location>
        <begin position="39"/>
        <end position="59"/>
    </location>
</feature>
<feature type="transmembrane region" description="Helical" evidence="1">
    <location>
        <begin position="76"/>
        <end position="96"/>
    </location>
</feature>
<feature type="transmembrane region" description="Helical" evidence="1">
    <location>
        <begin position="103"/>
        <end position="123"/>
    </location>
</feature>
<feature type="transmembrane region" description="Helical" evidence="1">
    <location>
        <begin position="124"/>
        <end position="144"/>
    </location>
</feature>
<feature type="transmembrane region" description="Helical" evidence="1">
    <location>
        <begin position="194"/>
        <end position="214"/>
    </location>
</feature>
<feature type="transmembrane region" description="Helical" evidence="1">
    <location>
        <begin position="219"/>
        <end position="239"/>
    </location>
</feature>
<feature type="transmembrane region" description="Helical" evidence="1">
    <location>
        <begin position="255"/>
        <end position="275"/>
    </location>
</feature>
<feature type="transmembrane region" description="Helical" evidence="1">
    <location>
        <begin position="301"/>
        <end position="321"/>
    </location>
</feature>
<accession>P9WG93</accession>
<accession>L0TAP4</accession>
<accession>O33228</accession>
<accession>P0A614</accession>
<sequence length="397" mass="43679">MGASGLVWTLTIVLIAGLMLVDYVLHVRKTHVPTLRQAVIQSATFVGIAILFGIAVVVFGGSELAVEYFACYLTDEALSVDNLFVFLVIISSFGVPRLAQQKVLLFGIAFALVTRTGFIFVGAALIENFNSAFYLFGLVLLVMAGNLARPTGLESRDAETLKRSVIIRLADRFLRTSQDYNGDRLFTVSNNKRMMTPLLLVMIAVGGTDILFAFDSIPALFGLTQNVYLVFAATAFSLLGLRQLYFLIDGLLDRLVYLSYGLAVILGFIGVKLMLEALHDNKIPFINGGKPVPTVEVSTTQSLTVIIIVLLITTAASFWSARGRAQNAMARARRYATAYLDLHYETESAERDKIFTALLAAERQINTLPTKYRMQPGQDDDLMTLLCRAHAARDAHM</sequence>
<keyword id="KW-1003">Cell membrane</keyword>
<keyword id="KW-0472">Membrane</keyword>
<keyword id="KW-1185">Reference proteome</keyword>
<keyword id="KW-0812">Transmembrane</keyword>
<keyword id="KW-1133">Transmembrane helix</keyword>